<comment type="function">
    <text evidence="1">Catalyzes the attachment of serine to tRNA(Ser). Is also able to aminoacylate tRNA(Sec) with serine, to form the misacylated tRNA L-seryl-tRNA(Sec), which will be further converted into selenocysteinyl-tRNA(Sec).</text>
</comment>
<comment type="catalytic activity">
    <reaction evidence="1">
        <text>tRNA(Ser) + L-serine + ATP = L-seryl-tRNA(Ser) + AMP + diphosphate + H(+)</text>
        <dbReference type="Rhea" id="RHEA:12292"/>
        <dbReference type="Rhea" id="RHEA-COMP:9669"/>
        <dbReference type="Rhea" id="RHEA-COMP:9703"/>
        <dbReference type="ChEBI" id="CHEBI:15378"/>
        <dbReference type="ChEBI" id="CHEBI:30616"/>
        <dbReference type="ChEBI" id="CHEBI:33019"/>
        <dbReference type="ChEBI" id="CHEBI:33384"/>
        <dbReference type="ChEBI" id="CHEBI:78442"/>
        <dbReference type="ChEBI" id="CHEBI:78533"/>
        <dbReference type="ChEBI" id="CHEBI:456215"/>
        <dbReference type="EC" id="6.1.1.11"/>
    </reaction>
</comment>
<comment type="catalytic activity">
    <reaction evidence="1">
        <text>tRNA(Sec) + L-serine + ATP = L-seryl-tRNA(Sec) + AMP + diphosphate + H(+)</text>
        <dbReference type="Rhea" id="RHEA:42580"/>
        <dbReference type="Rhea" id="RHEA-COMP:9742"/>
        <dbReference type="Rhea" id="RHEA-COMP:10128"/>
        <dbReference type="ChEBI" id="CHEBI:15378"/>
        <dbReference type="ChEBI" id="CHEBI:30616"/>
        <dbReference type="ChEBI" id="CHEBI:33019"/>
        <dbReference type="ChEBI" id="CHEBI:33384"/>
        <dbReference type="ChEBI" id="CHEBI:78442"/>
        <dbReference type="ChEBI" id="CHEBI:78533"/>
        <dbReference type="ChEBI" id="CHEBI:456215"/>
        <dbReference type="EC" id="6.1.1.11"/>
    </reaction>
</comment>
<comment type="pathway">
    <text evidence="1">Aminoacyl-tRNA biosynthesis; selenocysteinyl-tRNA(Sec) biosynthesis; L-seryl-tRNA(Sec) from L-serine and tRNA(Sec): step 1/1.</text>
</comment>
<comment type="subunit">
    <text evidence="1">Homodimer. The tRNA molecule binds across the dimer.</text>
</comment>
<comment type="subcellular location">
    <subcellularLocation>
        <location evidence="1">Cytoplasm</location>
    </subcellularLocation>
</comment>
<comment type="domain">
    <text evidence="1">Consists of two distinct domains, a catalytic core and a N-terminal extension that is involved in tRNA binding.</text>
</comment>
<comment type="similarity">
    <text evidence="1">Belongs to the class-II aminoacyl-tRNA synthetase family. Type-1 seryl-tRNA synthetase subfamily.</text>
</comment>
<evidence type="ECO:0000255" key="1">
    <source>
        <dbReference type="HAMAP-Rule" id="MF_00176"/>
    </source>
</evidence>
<gene>
    <name evidence="1" type="primary">serS</name>
    <name type="ordered locus">BRE_225</name>
</gene>
<sequence length="424" mass="48358">MLDLKFIRDNLELVRENIKNRGLKLELDLLISFDDERRKLITKIGELNALRNENANAMKDNIGDSSRHYLIEKGKALKAEIMDLEERLGYLTSRLLVEHKRIPNISAPDVPVGVSEDENVVLKVSGNIPKFDFKPKDHLEIGIHLDLFDFEKAREVSGNKFYYLKNEAVFLELAMINFAFSKLKAKGFDLFITPDVAREFIVDGIGFNPRGAESNIYKIEDTDKYLVGTAEITLGGYYYNTILDLKSPLKMAGLSHCFRKEAGAAGQFSKGLYRVHQFSKVEMFCFCRSEDSDRIHNEFLELEEEIFIELEIPYRVLNVCSSDLGAPAYKKYDIEAWMPGRGENGDYGEVTSTSNCTDYQSRRLKIRYKEDGQNKFVHMINGTAIASTRTLIAILENFQDAKGGVRIPKSLVKYTGFDYISPKN</sequence>
<organism>
    <name type="scientific">Borrelia recurrentis (strain A1)</name>
    <dbReference type="NCBI Taxonomy" id="412418"/>
    <lineage>
        <taxon>Bacteria</taxon>
        <taxon>Pseudomonadati</taxon>
        <taxon>Spirochaetota</taxon>
        <taxon>Spirochaetia</taxon>
        <taxon>Spirochaetales</taxon>
        <taxon>Borreliaceae</taxon>
        <taxon>Borrelia</taxon>
    </lineage>
</organism>
<dbReference type="EC" id="6.1.1.11" evidence="1"/>
<dbReference type="EMBL" id="CP000993">
    <property type="protein sequence ID" value="ACH94477.1"/>
    <property type="molecule type" value="Genomic_DNA"/>
</dbReference>
<dbReference type="RefSeq" id="WP_012538750.1">
    <property type="nucleotide sequence ID" value="NC_011244.1"/>
</dbReference>
<dbReference type="SMR" id="B5RR43"/>
<dbReference type="KEGG" id="bre:BRE_225"/>
<dbReference type="HOGENOM" id="CLU_023797_0_1_12"/>
<dbReference type="UniPathway" id="UPA00906">
    <property type="reaction ID" value="UER00895"/>
</dbReference>
<dbReference type="Proteomes" id="UP000000612">
    <property type="component" value="Chromosome"/>
</dbReference>
<dbReference type="GO" id="GO:0005737">
    <property type="term" value="C:cytoplasm"/>
    <property type="evidence" value="ECO:0007669"/>
    <property type="project" value="UniProtKB-SubCell"/>
</dbReference>
<dbReference type="GO" id="GO:0005524">
    <property type="term" value="F:ATP binding"/>
    <property type="evidence" value="ECO:0007669"/>
    <property type="project" value="UniProtKB-UniRule"/>
</dbReference>
<dbReference type="GO" id="GO:0004828">
    <property type="term" value="F:serine-tRNA ligase activity"/>
    <property type="evidence" value="ECO:0007669"/>
    <property type="project" value="UniProtKB-UniRule"/>
</dbReference>
<dbReference type="GO" id="GO:0016260">
    <property type="term" value="P:selenocysteine biosynthetic process"/>
    <property type="evidence" value="ECO:0007669"/>
    <property type="project" value="UniProtKB-UniRule"/>
</dbReference>
<dbReference type="GO" id="GO:0006434">
    <property type="term" value="P:seryl-tRNA aminoacylation"/>
    <property type="evidence" value="ECO:0007669"/>
    <property type="project" value="UniProtKB-UniRule"/>
</dbReference>
<dbReference type="CDD" id="cd00770">
    <property type="entry name" value="SerRS_core"/>
    <property type="match status" value="1"/>
</dbReference>
<dbReference type="FunFam" id="3.30.930.10:FF:000055">
    <property type="entry name" value="Serine--tRNA ligase"/>
    <property type="match status" value="1"/>
</dbReference>
<dbReference type="Gene3D" id="3.30.930.10">
    <property type="entry name" value="Bira Bifunctional Protein, Domain 2"/>
    <property type="match status" value="1"/>
</dbReference>
<dbReference type="Gene3D" id="1.10.287.40">
    <property type="entry name" value="Serine-tRNA synthetase, tRNA binding domain"/>
    <property type="match status" value="1"/>
</dbReference>
<dbReference type="HAMAP" id="MF_00176">
    <property type="entry name" value="Ser_tRNA_synth_type1"/>
    <property type="match status" value="1"/>
</dbReference>
<dbReference type="InterPro" id="IPR002314">
    <property type="entry name" value="aa-tRNA-synt_IIb"/>
</dbReference>
<dbReference type="InterPro" id="IPR006195">
    <property type="entry name" value="aa-tRNA-synth_II"/>
</dbReference>
<dbReference type="InterPro" id="IPR045864">
    <property type="entry name" value="aa-tRNA-synth_II/BPL/LPL"/>
</dbReference>
<dbReference type="InterPro" id="IPR002317">
    <property type="entry name" value="Ser-tRNA-ligase_type_1"/>
</dbReference>
<dbReference type="InterPro" id="IPR015866">
    <property type="entry name" value="Ser-tRNA-synth_1_N"/>
</dbReference>
<dbReference type="InterPro" id="IPR042103">
    <property type="entry name" value="SerRS_1_N_sf"/>
</dbReference>
<dbReference type="InterPro" id="IPR033729">
    <property type="entry name" value="SerRS_core"/>
</dbReference>
<dbReference type="InterPro" id="IPR010978">
    <property type="entry name" value="tRNA-bd_arm"/>
</dbReference>
<dbReference type="NCBIfam" id="TIGR00414">
    <property type="entry name" value="serS"/>
    <property type="match status" value="1"/>
</dbReference>
<dbReference type="PANTHER" id="PTHR11778">
    <property type="entry name" value="SERYL-TRNA SYNTHETASE"/>
    <property type="match status" value="1"/>
</dbReference>
<dbReference type="Pfam" id="PF02403">
    <property type="entry name" value="Seryl_tRNA_N"/>
    <property type="match status" value="1"/>
</dbReference>
<dbReference type="Pfam" id="PF00587">
    <property type="entry name" value="tRNA-synt_2b"/>
    <property type="match status" value="1"/>
</dbReference>
<dbReference type="PIRSF" id="PIRSF001529">
    <property type="entry name" value="Ser-tRNA-synth_IIa"/>
    <property type="match status" value="1"/>
</dbReference>
<dbReference type="PRINTS" id="PR00981">
    <property type="entry name" value="TRNASYNTHSER"/>
</dbReference>
<dbReference type="SUPFAM" id="SSF55681">
    <property type="entry name" value="Class II aaRS and biotin synthetases"/>
    <property type="match status" value="1"/>
</dbReference>
<dbReference type="SUPFAM" id="SSF46589">
    <property type="entry name" value="tRNA-binding arm"/>
    <property type="match status" value="1"/>
</dbReference>
<dbReference type="PROSITE" id="PS50862">
    <property type="entry name" value="AA_TRNA_LIGASE_II"/>
    <property type="match status" value="1"/>
</dbReference>
<name>SYS_BORRA</name>
<feature type="chain" id="PRO_1000098036" description="Serine--tRNA ligase">
    <location>
        <begin position="1"/>
        <end position="424"/>
    </location>
</feature>
<feature type="binding site" evidence="1">
    <location>
        <begin position="229"/>
        <end position="231"/>
    </location>
    <ligand>
        <name>L-serine</name>
        <dbReference type="ChEBI" id="CHEBI:33384"/>
    </ligand>
</feature>
<feature type="binding site" evidence="1">
    <location>
        <begin position="259"/>
        <end position="261"/>
    </location>
    <ligand>
        <name>ATP</name>
        <dbReference type="ChEBI" id="CHEBI:30616"/>
    </ligand>
</feature>
<feature type="binding site" evidence="1">
    <location>
        <position position="275"/>
    </location>
    <ligand>
        <name>ATP</name>
        <dbReference type="ChEBI" id="CHEBI:30616"/>
    </ligand>
</feature>
<feature type="binding site" evidence="1">
    <location>
        <position position="282"/>
    </location>
    <ligand>
        <name>L-serine</name>
        <dbReference type="ChEBI" id="CHEBI:33384"/>
    </ligand>
</feature>
<feature type="binding site" evidence="1">
    <location>
        <begin position="349"/>
        <end position="352"/>
    </location>
    <ligand>
        <name>ATP</name>
        <dbReference type="ChEBI" id="CHEBI:30616"/>
    </ligand>
</feature>
<feature type="binding site" evidence="1">
    <location>
        <position position="383"/>
    </location>
    <ligand>
        <name>L-serine</name>
        <dbReference type="ChEBI" id="CHEBI:33384"/>
    </ligand>
</feature>
<accession>B5RR43</accession>
<proteinExistence type="inferred from homology"/>
<protein>
    <recommendedName>
        <fullName evidence="1">Serine--tRNA ligase</fullName>
        <ecNumber evidence="1">6.1.1.11</ecNumber>
    </recommendedName>
    <alternativeName>
        <fullName evidence="1">Seryl-tRNA synthetase</fullName>
        <shortName evidence="1">SerRS</shortName>
    </alternativeName>
    <alternativeName>
        <fullName evidence="1">Seryl-tRNA(Ser/Sec) synthetase</fullName>
    </alternativeName>
</protein>
<reference key="1">
    <citation type="journal article" date="2008" name="PLoS Genet.">
        <title>The genome of Borrelia recurrentis, the agent of deadly louse-borne relapsing fever, is a degraded subset of tick-borne Borrelia duttonii.</title>
        <authorList>
            <person name="Lescot M."/>
            <person name="Audic S."/>
            <person name="Robert C."/>
            <person name="Nguyen T.T."/>
            <person name="Blanc G."/>
            <person name="Cutler S.J."/>
            <person name="Wincker P."/>
            <person name="Couloux A."/>
            <person name="Claverie J.-M."/>
            <person name="Raoult D."/>
            <person name="Drancourt M."/>
        </authorList>
    </citation>
    <scope>NUCLEOTIDE SEQUENCE [LARGE SCALE GENOMIC DNA]</scope>
    <source>
        <strain>A1</strain>
    </source>
</reference>
<keyword id="KW-0030">Aminoacyl-tRNA synthetase</keyword>
<keyword id="KW-0067">ATP-binding</keyword>
<keyword id="KW-0963">Cytoplasm</keyword>
<keyword id="KW-0436">Ligase</keyword>
<keyword id="KW-0547">Nucleotide-binding</keyword>
<keyword id="KW-0648">Protein biosynthesis</keyword>